<organism>
    <name type="scientific">Streptococcus agalactiae serotype Ia (strain ATCC 27591 / A909 / CDC SS700)</name>
    <dbReference type="NCBI Taxonomy" id="205921"/>
    <lineage>
        <taxon>Bacteria</taxon>
        <taxon>Bacillati</taxon>
        <taxon>Bacillota</taxon>
        <taxon>Bacilli</taxon>
        <taxon>Lactobacillales</taxon>
        <taxon>Streptococcaceae</taxon>
        <taxon>Streptococcus</taxon>
    </lineage>
</organism>
<protein>
    <recommendedName>
        <fullName evidence="1">3-phosphoshikimate 1-carboxyvinyltransferase</fullName>
        <ecNumber evidence="1">2.5.1.19</ecNumber>
    </recommendedName>
    <alternativeName>
        <fullName evidence="1">5-enolpyruvylshikimate-3-phosphate synthase</fullName>
        <shortName evidence="1">EPSP synthase</shortName>
        <shortName evidence="1">EPSPS</shortName>
    </alternativeName>
</protein>
<comment type="function">
    <text evidence="1">Catalyzes the transfer of the enolpyruvyl moiety of phosphoenolpyruvate (PEP) to the 5-hydroxyl of shikimate-3-phosphate (S3P) to produce enolpyruvyl shikimate-3-phosphate and inorganic phosphate.</text>
</comment>
<comment type="catalytic activity">
    <reaction evidence="1">
        <text>3-phosphoshikimate + phosphoenolpyruvate = 5-O-(1-carboxyvinyl)-3-phosphoshikimate + phosphate</text>
        <dbReference type="Rhea" id="RHEA:21256"/>
        <dbReference type="ChEBI" id="CHEBI:43474"/>
        <dbReference type="ChEBI" id="CHEBI:57701"/>
        <dbReference type="ChEBI" id="CHEBI:58702"/>
        <dbReference type="ChEBI" id="CHEBI:145989"/>
        <dbReference type="EC" id="2.5.1.19"/>
    </reaction>
    <physiologicalReaction direction="left-to-right" evidence="1">
        <dbReference type="Rhea" id="RHEA:21257"/>
    </physiologicalReaction>
</comment>
<comment type="pathway">
    <text evidence="1">Metabolic intermediate biosynthesis; chorismate biosynthesis; chorismate from D-erythrose 4-phosphate and phosphoenolpyruvate: step 6/7.</text>
</comment>
<comment type="subunit">
    <text evidence="1">Monomer.</text>
</comment>
<comment type="subcellular location">
    <subcellularLocation>
        <location evidence="1">Cytoplasm</location>
    </subcellularLocation>
</comment>
<comment type="similarity">
    <text evidence="1">Belongs to the EPSP synthase family.</text>
</comment>
<sequence length="427" mass="45882">MKLLTNANTLKGTIRVPGDKSISHRAIIFGSISQGVTRIVDVLRGEDVLSTIEAFKQMGVLIEDDGEIITIYGKGFAGLTQPNNLLDMGNSGTSMRLIAGVLAGQEFEVTMVGDNSLSKRPMDRIALPLSKMGARISGVTNRDLPPLKLQGTKKLKPIFYHLPVASAQVKSALIFAALQTKGESLIVEKEQTRNHTEDMIRQFGGHLDIKDKEIRLNGGQSLVGQDIRVPGDISSAAFWIVAGLIIPNSHIILENVGINETRTGILDVVSKMGGKIKLSSVDNQVKSATLTVDYSHLQATHISGAMIPRLIDELPIIALLATQAQGTTVIADAQELKVKETDRIQVVVESLKQMGADITATADGMIIRGNTPLHAASLDCHGDHRIGMMIAIAALLVKEGEVDLSGEEAINTSYPNFLEHLEGLVNA</sequence>
<dbReference type="EC" id="2.5.1.19" evidence="1"/>
<dbReference type="EMBL" id="CP000114">
    <property type="protein sequence ID" value="ABA45909.1"/>
    <property type="molecule type" value="Genomic_DNA"/>
</dbReference>
<dbReference type="RefSeq" id="WP_000772014.1">
    <property type="nucleotide sequence ID" value="NC_007432.1"/>
</dbReference>
<dbReference type="SMR" id="Q3K2B0"/>
<dbReference type="GeneID" id="66885543"/>
<dbReference type="KEGG" id="sak:SAK_0715"/>
<dbReference type="HOGENOM" id="CLU_024321_0_1_9"/>
<dbReference type="UniPathway" id="UPA00053">
    <property type="reaction ID" value="UER00089"/>
</dbReference>
<dbReference type="GO" id="GO:0005737">
    <property type="term" value="C:cytoplasm"/>
    <property type="evidence" value="ECO:0007669"/>
    <property type="project" value="UniProtKB-SubCell"/>
</dbReference>
<dbReference type="GO" id="GO:0003866">
    <property type="term" value="F:3-phosphoshikimate 1-carboxyvinyltransferase activity"/>
    <property type="evidence" value="ECO:0007669"/>
    <property type="project" value="UniProtKB-UniRule"/>
</dbReference>
<dbReference type="GO" id="GO:0008652">
    <property type="term" value="P:amino acid biosynthetic process"/>
    <property type="evidence" value="ECO:0007669"/>
    <property type="project" value="UniProtKB-KW"/>
</dbReference>
<dbReference type="GO" id="GO:0009073">
    <property type="term" value="P:aromatic amino acid family biosynthetic process"/>
    <property type="evidence" value="ECO:0007669"/>
    <property type="project" value="UniProtKB-KW"/>
</dbReference>
<dbReference type="GO" id="GO:0009423">
    <property type="term" value="P:chorismate biosynthetic process"/>
    <property type="evidence" value="ECO:0007669"/>
    <property type="project" value="UniProtKB-UniRule"/>
</dbReference>
<dbReference type="CDD" id="cd01556">
    <property type="entry name" value="EPSP_synthase"/>
    <property type="match status" value="1"/>
</dbReference>
<dbReference type="FunFam" id="3.65.10.10:FF:000005">
    <property type="entry name" value="3-phosphoshikimate 1-carboxyvinyltransferase"/>
    <property type="match status" value="1"/>
</dbReference>
<dbReference type="Gene3D" id="3.65.10.10">
    <property type="entry name" value="Enolpyruvate transferase domain"/>
    <property type="match status" value="2"/>
</dbReference>
<dbReference type="HAMAP" id="MF_00210">
    <property type="entry name" value="EPSP_synth"/>
    <property type="match status" value="1"/>
</dbReference>
<dbReference type="InterPro" id="IPR001986">
    <property type="entry name" value="Enolpyruvate_Tfrase_dom"/>
</dbReference>
<dbReference type="InterPro" id="IPR036968">
    <property type="entry name" value="Enolpyruvate_Tfrase_sf"/>
</dbReference>
<dbReference type="InterPro" id="IPR006264">
    <property type="entry name" value="EPSP_synthase"/>
</dbReference>
<dbReference type="InterPro" id="IPR023193">
    <property type="entry name" value="EPSP_synthase_CS"/>
</dbReference>
<dbReference type="InterPro" id="IPR013792">
    <property type="entry name" value="RNA3'P_cycl/enolpyr_Trfase_a/b"/>
</dbReference>
<dbReference type="NCBIfam" id="TIGR01356">
    <property type="entry name" value="aroA"/>
    <property type="match status" value="1"/>
</dbReference>
<dbReference type="PANTHER" id="PTHR21090">
    <property type="entry name" value="AROM/DEHYDROQUINATE SYNTHASE"/>
    <property type="match status" value="1"/>
</dbReference>
<dbReference type="PANTHER" id="PTHR21090:SF5">
    <property type="entry name" value="PENTAFUNCTIONAL AROM POLYPEPTIDE"/>
    <property type="match status" value="1"/>
</dbReference>
<dbReference type="Pfam" id="PF00275">
    <property type="entry name" value="EPSP_synthase"/>
    <property type="match status" value="1"/>
</dbReference>
<dbReference type="PIRSF" id="PIRSF000505">
    <property type="entry name" value="EPSPS"/>
    <property type="match status" value="1"/>
</dbReference>
<dbReference type="SUPFAM" id="SSF55205">
    <property type="entry name" value="EPT/RTPC-like"/>
    <property type="match status" value="1"/>
</dbReference>
<dbReference type="PROSITE" id="PS00104">
    <property type="entry name" value="EPSP_SYNTHASE_1"/>
    <property type="match status" value="1"/>
</dbReference>
<dbReference type="PROSITE" id="PS00885">
    <property type="entry name" value="EPSP_SYNTHASE_2"/>
    <property type="match status" value="1"/>
</dbReference>
<accession>Q3K2B0</accession>
<keyword id="KW-0028">Amino-acid biosynthesis</keyword>
<keyword id="KW-0057">Aromatic amino acid biosynthesis</keyword>
<keyword id="KW-0963">Cytoplasm</keyword>
<keyword id="KW-0808">Transferase</keyword>
<proteinExistence type="inferred from homology"/>
<evidence type="ECO:0000255" key="1">
    <source>
        <dbReference type="HAMAP-Rule" id="MF_00210"/>
    </source>
</evidence>
<gene>
    <name evidence="1" type="primary">aroA</name>
    <name type="ordered locus">SAK_0715</name>
</gene>
<feature type="chain" id="PRO_1000012489" description="3-phosphoshikimate 1-carboxyvinyltransferase">
    <location>
        <begin position="1"/>
        <end position="427"/>
    </location>
</feature>
<feature type="active site" description="Proton acceptor" evidence="1">
    <location>
        <position position="312"/>
    </location>
</feature>
<feature type="binding site" evidence="1">
    <location>
        <position position="20"/>
    </location>
    <ligand>
        <name>3-phosphoshikimate</name>
        <dbReference type="ChEBI" id="CHEBI:145989"/>
    </ligand>
</feature>
<feature type="binding site" evidence="1">
    <location>
        <position position="20"/>
    </location>
    <ligand>
        <name>phosphoenolpyruvate</name>
        <dbReference type="ChEBI" id="CHEBI:58702"/>
    </ligand>
</feature>
<feature type="binding site" evidence="1">
    <location>
        <position position="21"/>
    </location>
    <ligand>
        <name>3-phosphoshikimate</name>
        <dbReference type="ChEBI" id="CHEBI:145989"/>
    </ligand>
</feature>
<feature type="binding site" evidence="1">
    <location>
        <position position="25"/>
    </location>
    <ligand>
        <name>3-phosphoshikimate</name>
        <dbReference type="ChEBI" id="CHEBI:145989"/>
    </ligand>
</feature>
<feature type="binding site" evidence="1">
    <location>
        <position position="92"/>
    </location>
    <ligand>
        <name>phosphoenolpyruvate</name>
        <dbReference type="ChEBI" id="CHEBI:58702"/>
    </ligand>
</feature>
<feature type="binding site" evidence="1">
    <location>
        <position position="120"/>
    </location>
    <ligand>
        <name>phosphoenolpyruvate</name>
        <dbReference type="ChEBI" id="CHEBI:58702"/>
    </ligand>
</feature>
<feature type="binding site" evidence="1">
    <location>
        <position position="166"/>
    </location>
    <ligand>
        <name>3-phosphoshikimate</name>
        <dbReference type="ChEBI" id="CHEBI:145989"/>
    </ligand>
</feature>
<feature type="binding site" evidence="1">
    <location>
        <position position="168"/>
    </location>
    <ligand>
        <name>3-phosphoshikimate</name>
        <dbReference type="ChEBI" id="CHEBI:145989"/>
    </ligand>
</feature>
<feature type="binding site" evidence="1">
    <location>
        <position position="168"/>
    </location>
    <ligand>
        <name>phosphoenolpyruvate</name>
        <dbReference type="ChEBI" id="CHEBI:58702"/>
    </ligand>
</feature>
<feature type="binding site" evidence="1">
    <location>
        <position position="312"/>
    </location>
    <ligand>
        <name>3-phosphoshikimate</name>
        <dbReference type="ChEBI" id="CHEBI:145989"/>
    </ligand>
</feature>
<feature type="binding site" evidence="1">
    <location>
        <position position="339"/>
    </location>
    <ligand>
        <name>3-phosphoshikimate</name>
        <dbReference type="ChEBI" id="CHEBI:145989"/>
    </ligand>
</feature>
<feature type="binding site" evidence="1">
    <location>
        <position position="343"/>
    </location>
    <ligand>
        <name>phosphoenolpyruvate</name>
        <dbReference type="ChEBI" id="CHEBI:58702"/>
    </ligand>
</feature>
<feature type="binding site" evidence="1">
    <location>
        <position position="385"/>
    </location>
    <ligand>
        <name>phosphoenolpyruvate</name>
        <dbReference type="ChEBI" id="CHEBI:58702"/>
    </ligand>
</feature>
<name>AROA_STRA1</name>
<reference key="1">
    <citation type="journal article" date="2005" name="Proc. Natl. Acad. Sci. U.S.A.">
        <title>Genome analysis of multiple pathogenic isolates of Streptococcus agalactiae: implications for the microbial 'pan-genome'.</title>
        <authorList>
            <person name="Tettelin H."/>
            <person name="Masignani V."/>
            <person name="Cieslewicz M.J."/>
            <person name="Donati C."/>
            <person name="Medini D."/>
            <person name="Ward N.L."/>
            <person name="Angiuoli S.V."/>
            <person name="Crabtree J."/>
            <person name="Jones A.L."/>
            <person name="Durkin A.S."/>
            <person name="DeBoy R.T."/>
            <person name="Davidsen T.M."/>
            <person name="Mora M."/>
            <person name="Scarselli M."/>
            <person name="Margarit y Ros I."/>
            <person name="Peterson J.D."/>
            <person name="Hauser C.R."/>
            <person name="Sundaram J.P."/>
            <person name="Nelson W.C."/>
            <person name="Madupu R."/>
            <person name="Brinkac L.M."/>
            <person name="Dodson R.J."/>
            <person name="Rosovitz M.J."/>
            <person name="Sullivan S.A."/>
            <person name="Daugherty S.C."/>
            <person name="Haft D.H."/>
            <person name="Selengut J."/>
            <person name="Gwinn M.L."/>
            <person name="Zhou L."/>
            <person name="Zafar N."/>
            <person name="Khouri H."/>
            <person name="Radune D."/>
            <person name="Dimitrov G."/>
            <person name="Watkins K."/>
            <person name="O'Connor K.J."/>
            <person name="Smith S."/>
            <person name="Utterback T.R."/>
            <person name="White O."/>
            <person name="Rubens C.E."/>
            <person name="Grandi G."/>
            <person name="Madoff L.C."/>
            <person name="Kasper D.L."/>
            <person name="Telford J.L."/>
            <person name="Wessels M.R."/>
            <person name="Rappuoli R."/>
            <person name="Fraser C.M."/>
        </authorList>
    </citation>
    <scope>NUCLEOTIDE SEQUENCE [LARGE SCALE GENOMIC DNA]</scope>
    <source>
        <strain>ATCC 27591 / A909 / CDC SS700</strain>
    </source>
</reference>